<accession>Q6GP48</accession>
<proteinExistence type="evidence at transcript level"/>
<name>MF1LA_XENLA</name>
<dbReference type="EMBL" id="BC073296">
    <property type="protein sequence ID" value="AAH73296.1"/>
    <property type="molecule type" value="mRNA"/>
</dbReference>
<dbReference type="RefSeq" id="NP_001085754.1">
    <property type="nucleotide sequence ID" value="NM_001092285.1"/>
</dbReference>
<dbReference type="SMR" id="Q6GP48"/>
<dbReference type="DNASU" id="444181"/>
<dbReference type="GeneID" id="444181"/>
<dbReference type="KEGG" id="xla:444181"/>
<dbReference type="AGR" id="Xenbase:XB-GENE-5771549"/>
<dbReference type="CTD" id="444181"/>
<dbReference type="Xenbase" id="XB-GENE-5771549">
    <property type="gene designation" value="mtfr1l.L"/>
</dbReference>
<dbReference type="OMA" id="LRHKWKP"/>
<dbReference type="OrthoDB" id="9930891at2759"/>
<dbReference type="Proteomes" id="UP000186698">
    <property type="component" value="Chromosome 2L"/>
</dbReference>
<dbReference type="Bgee" id="444181">
    <property type="expression patterns" value="Expressed in egg cell and 19 other cell types or tissues"/>
</dbReference>
<dbReference type="GO" id="GO:0005741">
    <property type="term" value="C:mitochondrial outer membrane"/>
    <property type="evidence" value="ECO:0007669"/>
    <property type="project" value="UniProtKB-SubCell"/>
</dbReference>
<dbReference type="GO" id="GO:0005739">
    <property type="term" value="C:mitochondrion"/>
    <property type="evidence" value="ECO:0000318"/>
    <property type="project" value="GO_Central"/>
</dbReference>
<dbReference type="GO" id="GO:0009060">
    <property type="term" value="P:aerobic respiration"/>
    <property type="evidence" value="ECO:0000318"/>
    <property type="project" value="GO_Central"/>
</dbReference>
<dbReference type="GO" id="GO:0000266">
    <property type="term" value="P:mitochondrial fission"/>
    <property type="evidence" value="ECO:0000318"/>
    <property type="project" value="GO_Central"/>
</dbReference>
<dbReference type="InterPro" id="IPR007972">
    <property type="entry name" value="Mtfr1"/>
</dbReference>
<dbReference type="PANTHER" id="PTHR14215:SF3">
    <property type="entry name" value="MITOCHONDRIAL FISSION REGULATOR 1-LIKE"/>
    <property type="match status" value="1"/>
</dbReference>
<dbReference type="PANTHER" id="PTHR14215">
    <property type="entry name" value="PROTEIN OF UNKNOWN FUNCTION DUF729"/>
    <property type="match status" value="1"/>
</dbReference>
<dbReference type="Pfam" id="PF05308">
    <property type="entry name" value="Mito_fiss_reg"/>
    <property type="match status" value="1"/>
</dbReference>
<organism>
    <name type="scientific">Xenopus laevis</name>
    <name type="common">African clawed frog</name>
    <dbReference type="NCBI Taxonomy" id="8355"/>
    <lineage>
        <taxon>Eukaryota</taxon>
        <taxon>Metazoa</taxon>
        <taxon>Chordata</taxon>
        <taxon>Craniata</taxon>
        <taxon>Vertebrata</taxon>
        <taxon>Euteleostomi</taxon>
        <taxon>Amphibia</taxon>
        <taxon>Batrachia</taxon>
        <taxon>Anura</taxon>
        <taxon>Pipoidea</taxon>
        <taxon>Pipidae</taxon>
        <taxon>Xenopodinae</taxon>
        <taxon>Xenopus</taxon>
        <taxon>Xenopus</taxon>
    </lineage>
</organism>
<keyword id="KW-0472">Membrane</keyword>
<keyword id="KW-0496">Mitochondrion</keyword>
<keyword id="KW-1000">Mitochondrion outer membrane</keyword>
<keyword id="KW-1185">Reference proteome</keyword>
<evidence type="ECO:0000250" key="1">
    <source>
        <dbReference type="UniProtKB" id="Q9H019"/>
    </source>
</evidence>
<evidence type="ECO:0000256" key="2">
    <source>
        <dbReference type="SAM" id="MobiDB-lite"/>
    </source>
</evidence>
<evidence type="ECO:0000305" key="3"/>
<gene>
    <name type="primary">mtfr1l-a</name>
    <name type="synonym">fam54b-a</name>
</gene>
<reference key="1">
    <citation type="submission" date="2004-06" db="EMBL/GenBank/DDBJ databases">
        <authorList>
            <consortium name="NIH - Xenopus Gene Collection (XGC) project"/>
        </authorList>
    </citation>
    <scope>NUCLEOTIDE SEQUENCE [LARGE SCALE MRNA]</scope>
    <source>
        <tissue>Spleen</tissue>
    </source>
</reference>
<sequence length="319" mass="35740">MASLGAAAEPERNLFGKDEAEAYESPEGRRSGRKKRTKIVPVWENKPCGSSRSLVRRIGSHLPLKPCTRACFEALPSASNLYFTDTPMVPTLADIKWIAADDDETYARVRSDTRPLKHKWRPSPLLVMQRNSSVPNLKMKEEKMFCLKKPGLSLNRSSDIQEELSILRSQIARIVAGDSVSSCLGSDSIPVNVDLEASLPDYGPSYQSTTSFVISDITEEDELDVSEYSSASLVDSTISLQRQIETNMSDDDEDSMCLSKSNSFADMMGILKDIHKMKLNRDWSNRNQCLHKEEDPVNLISEVLRQKFALCDPDNVNNE</sequence>
<protein>
    <recommendedName>
        <fullName>Mitochondrial fission regulator 1-like-A</fullName>
    </recommendedName>
</protein>
<comment type="function">
    <text evidence="1">Mitochondrial protein required for adaptation of miochondrial dynamics to metabolic changes. Regulates mitochondrial morphology at steady state and mediates AMPK-dependent stress-induced mitochondrial fragmentation via the control of OPA1 levels.</text>
</comment>
<comment type="subcellular location">
    <subcellularLocation>
        <location evidence="1">Mitochondrion outer membrane</location>
        <topology evidence="1">Peripheral membrane protein</topology>
        <orientation evidence="1">Cytoplasmic side</orientation>
    </subcellularLocation>
</comment>
<comment type="similarity">
    <text evidence="3">Belongs to the MTFR1 family.</text>
</comment>
<feature type="chain" id="PRO_0000341571" description="Mitochondrial fission regulator 1-like-A">
    <location>
        <begin position="1"/>
        <end position="319"/>
    </location>
</feature>
<feature type="region of interest" description="Disordered" evidence="2">
    <location>
        <begin position="1"/>
        <end position="37"/>
    </location>
</feature>
<feature type="compositionally biased region" description="Basic and acidic residues" evidence="2">
    <location>
        <begin position="9"/>
        <end position="30"/>
    </location>
</feature>